<name>RL15_PYRIL</name>
<sequence>MVRRFKPAVKYRRGSRTHGWGRVGQHRKSGSSGGKGMVGFHKHKWSLVMKYGESGTGWPFYGKHGFKQPPTIAIEWRPINVGSLSDIIKELKKEGKIAEEGGKYVIRLLELGYNKLLGGGHIDVPVIVYTPAASRTAVEKIEKAGGEVRIIPLIHK</sequence>
<feature type="chain" id="PRO_1000142866" description="Large ribosomal subunit protein uL15">
    <location>
        <begin position="1"/>
        <end position="156"/>
    </location>
</feature>
<feature type="region of interest" description="Disordered" evidence="2">
    <location>
        <begin position="14"/>
        <end position="35"/>
    </location>
</feature>
<evidence type="ECO:0000255" key="1">
    <source>
        <dbReference type="HAMAP-Rule" id="MF_01341"/>
    </source>
</evidence>
<evidence type="ECO:0000256" key="2">
    <source>
        <dbReference type="SAM" id="MobiDB-lite"/>
    </source>
</evidence>
<evidence type="ECO:0000305" key="3"/>
<keyword id="KW-0687">Ribonucleoprotein</keyword>
<keyword id="KW-0689">Ribosomal protein</keyword>
<keyword id="KW-0694">RNA-binding</keyword>
<keyword id="KW-0699">rRNA-binding</keyword>
<comment type="function">
    <text evidence="1">Binds to the 23S rRNA.</text>
</comment>
<comment type="subunit">
    <text evidence="1">Part of the 50S ribosomal subunit.</text>
</comment>
<comment type="similarity">
    <text evidence="1">Belongs to the universal ribosomal protein uL15 family.</text>
</comment>
<dbReference type="EMBL" id="CP000504">
    <property type="protein sequence ID" value="ABL88139.1"/>
    <property type="molecule type" value="Genomic_DNA"/>
</dbReference>
<dbReference type="RefSeq" id="WP_011762714.1">
    <property type="nucleotide sequence ID" value="NC_008701.1"/>
</dbReference>
<dbReference type="SMR" id="A1RT57"/>
<dbReference type="STRING" id="384616.Pisl_0963"/>
<dbReference type="GeneID" id="4617257"/>
<dbReference type="KEGG" id="pis:Pisl_0963"/>
<dbReference type="eggNOG" id="arCOG00779">
    <property type="taxonomic scope" value="Archaea"/>
</dbReference>
<dbReference type="HOGENOM" id="CLU_109163_0_0_2"/>
<dbReference type="OrthoDB" id="9418at2157"/>
<dbReference type="Proteomes" id="UP000002595">
    <property type="component" value="Chromosome"/>
</dbReference>
<dbReference type="GO" id="GO:0022625">
    <property type="term" value="C:cytosolic large ribosomal subunit"/>
    <property type="evidence" value="ECO:0007669"/>
    <property type="project" value="TreeGrafter"/>
</dbReference>
<dbReference type="GO" id="GO:0019843">
    <property type="term" value="F:rRNA binding"/>
    <property type="evidence" value="ECO:0007669"/>
    <property type="project" value="UniProtKB-UniRule"/>
</dbReference>
<dbReference type="GO" id="GO:0003735">
    <property type="term" value="F:structural constituent of ribosome"/>
    <property type="evidence" value="ECO:0007669"/>
    <property type="project" value="InterPro"/>
</dbReference>
<dbReference type="GO" id="GO:0006412">
    <property type="term" value="P:translation"/>
    <property type="evidence" value="ECO:0007669"/>
    <property type="project" value="UniProtKB-UniRule"/>
</dbReference>
<dbReference type="FunFam" id="4.10.990.10:FF:000001">
    <property type="entry name" value="50S ribosomal protein L15"/>
    <property type="match status" value="1"/>
</dbReference>
<dbReference type="Gene3D" id="3.100.10.10">
    <property type="match status" value="1"/>
</dbReference>
<dbReference type="Gene3D" id="4.10.990.10">
    <property type="match status" value="1"/>
</dbReference>
<dbReference type="HAMAP" id="MF_01341">
    <property type="entry name" value="Ribosomal_uL15"/>
    <property type="match status" value="1"/>
</dbReference>
<dbReference type="InterPro" id="IPR027386">
    <property type="entry name" value="Rbsml_uL15_N"/>
</dbReference>
<dbReference type="InterPro" id="IPR030878">
    <property type="entry name" value="Ribosomal_uL15"/>
</dbReference>
<dbReference type="InterPro" id="IPR021131">
    <property type="entry name" value="Ribosomal_uL15/eL18"/>
</dbReference>
<dbReference type="InterPro" id="IPR036227">
    <property type="entry name" value="Ribosomal_uL15/eL18_sf"/>
</dbReference>
<dbReference type="InterPro" id="IPR001196">
    <property type="entry name" value="Ribosomal_uL15_CS"/>
</dbReference>
<dbReference type="PANTHER" id="PTHR11721">
    <property type="entry name" value="60S RIBOSOMAL PROTEIN L27A"/>
    <property type="match status" value="1"/>
</dbReference>
<dbReference type="PANTHER" id="PTHR11721:SF3">
    <property type="entry name" value="LARGE RIBOSOMAL SUBUNIT PROTEIN UL15"/>
    <property type="match status" value="1"/>
</dbReference>
<dbReference type="Pfam" id="PF00828">
    <property type="entry name" value="Ribosomal_L27A"/>
    <property type="match status" value="1"/>
</dbReference>
<dbReference type="SUPFAM" id="SSF52080">
    <property type="entry name" value="Ribosomal proteins L15p and L18e"/>
    <property type="match status" value="1"/>
</dbReference>
<dbReference type="PROSITE" id="PS00475">
    <property type="entry name" value="RIBOSOMAL_L15"/>
    <property type="match status" value="1"/>
</dbReference>
<organism>
    <name type="scientific">Pyrobaculum islandicum (strain DSM 4184 / JCM 9189 / GEO3)</name>
    <dbReference type="NCBI Taxonomy" id="384616"/>
    <lineage>
        <taxon>Archaea</taxon>
        <taxon>Thermoproteota</taxon>
        <taxon>Thermoprotei</taxon>
        <taxon>Thermoproteales</taxon>
        <taxon>Thermoproteaceae</taxon>
        <taxon>Pyrobaculum</taxon>
    </lineage>
</organism>
<proteinExistence type="inferred from homology"/>
<protein>
    <recommendedName>
        <fullName evidence="1">Large ribosomal subunit protein uL15</fullName>
    </recommendedName>
    <alternativeName>
        <fullName evidence="3">50S ribosomal protein L15</fullName>
    </alternativeName>
</protein>
<accession>A1RT57</accession>
<gene>
    <name evidence="1" type="primary">rpl15</name>
    <name type="ordered locus">Pisl_0963</name>
</gene>
<reference key="1">
    <citation type="submission" date="2006-12" db="EMBL/GenBank/DDBJ databases">
        <title>Complete sequence of Pyrobaculum islandicum DSM 4184.</title>
        <authorList>
            <person name="Copeland A."/>
            <person name="Lucas S."/>
            <person name="Lapidus A."/>
            <person name="Barry K."/>
            <person name="Detter J.C."/>
            <person name="Glavina del Rio T."/>
            <person name="Dalin E."/>
            <person name="Tice H."/>
            <person name="Pitluck S."/>
            <person name="Meincke L."/>
            <person name="Brettin T."/>
            <person name="Bruce D."/>
            <person name="Han C."/>
            <person name="Tapia R."/>
            <person name="Gilna P."/>
            <person name="Schmutz J."/>
            <person name="Larimer F."/>
            <person name="Land M."/>
            <person name="Hauser L."/>
            <person name="Kyrpides N."/>
            <person name="Mikhailova N."/>
            <person name="Cozen A.E."/>
            <person name="Fitz-Gibbon S.T."/>
            <person name="House C.H."/>
            <person name="Saltikov C."/>
            <person name="Lowe T."/>
            <person name="Richardson P."/>
        </authorList>
    </citation>
    <scope>NUCLEOTIDE SEQUENCE [LARGE SCALE GENOMIC DNA]</scope>
    <source>
        <strain>DSM 4184 / JCM 9189 / GEO3</strain>
    </source>
</reference>